<keyword id="KW-0255">Endonuclease</keyword>
<keyword id="KW-0378">Hydrolase</keyword>
<keyword id="KW-0479">Metal-binding</keyword>
<keyword id="KW-0540">Nuclease</keyword>
<keyword id="KW-1185">Reference proteome</keyword>
<keyword id="KW-0819">tRNA processing</keyword>
<keyword id="KW-0862">Zinc</keyword>
<evidence type="ECO:0000255" key="1">
    <source>
        <dbReference type="HAMAP-Rule" id="MF_01818"/>
    </source>
</evidence>
<proteinExistence type="inferred from homology"/>
<gene>
    <name evidence="1" type="primary">rnz</name>
    <name type="ordered locus">AF_0939</name>
</gene>
<reference key="1">
    <citation type="journal article" date="1997" name="Nature">
        <title>The complete genome sequence of the hyperthermophilic, sulphate-reducing archaeon Archaeoglobus fulgidus.</title>
        <authorList>
            <person name="Klenk H.-P."/>
            <person name="Clayton R.A."/>
            <person name="Tomb J.-F."/>
            <person name="White O."/>
            <person name="Nelson K.E."/>
            <person name="Ketchum K.A."/>
            <person name="Dodson R.J."/>
            <person name="Gwinn M.L."/>
            <person name="Hickey E.K."/>
            <person name="Peterson J.D."/>
            <person name="Richardson D.L."/>
            <person name="Kerlavage A.R."/>
            <person name="Graham D.E."/>
            <person name="Kyrpides N.C."/>
            <person name="Fleischmann R.D."/>
            <person name="Quackenbush J."/>
            <person name="Lee N.H."/>
            <person name="Sutton G.G."/>
            <person name="Gill S.R."/>
            <person name="Kirkness E.F."/>
            <person name="Dougherty B.A."/>
            <person name="McKenney K."/>
            <person name="Adams M.D."/>
            <person name="Loftus B.J."/>
            <person name="Peterson S.N."/>
            <person name="Reich C.I."/>
            <person name="McNeil L.K."/>
            <person name="Badger J.H."/>
            <person name="Glodek A."/>
            <person name="Zhou L."/>
            <person name="Overbeek R."/>
            <person name="Gocayne J.D."/>
            <person name="Weidman J.F."/>
            <person name="McDonald L.A."/>
            <person name="Utterback T.R."/>
            <person name="Cotton M.D."/>
            <person name="Spriggs T."/>
            <person name="Artiach P."/>
            <person name="Kaine B.P."/>
            <person name="Sykes S.M."/>
            <person name="Sadow P.W."/>
            <person name="D'Andrea K.P."/>
            <person name="Bowman C."/>
            <person name="Fujii C."/>
            <person name="Garland S.A."/>
            <person name="Mason T.M."/>
            <person name="Olsen G.J."/>
            <person name="Fraser C.M."/>
            <person name="Smith H.O."/>
            <person name="Woese C.R."/>
            <person name="Venter J.C."/>
        </authorList>
    </citation>
    <scope>NUCLEOTIDE SEQUENCE [LARGE SCALE GENOMIC DNA]</scope>
    <source>
        <strain>ATCC 49558 / DSM 4304 / JCM 9628 / NBRC 100126 / VC-16</strain>
    </source>
</reference>
<protein>
    <recommendedName>
        <fullName evidence="1">Ribonuclease Z</fullName>
        <shortName evidence="1">RNase Z</shortName>
        <ecNumber evidence="1">3.1.26.11</ecNumber>
    </recommendedName>
    <alternativeName>
        <fullName evidence="1">tRNA 3 endonuclease</fullName>
    </alternativeName>
    <alternativeName>
        <fullName evidence="1">tRNase Z</fullName>
    </alternativeName>
</protein>
<comment type="function">
    <text evidence="1">Zinc phosphodiesterase, which displays some tRNA 3'-processing endonuclease activity. Probably involved in tRNA maturation, by removing a 3'-trailer from precursor tRNA.</text>
</comment>
<comment type="catalytic activity">
    <reaction evidence="1">
        <text>Endonucleolytic cleavage of RNA, removing extra 3' nucleotides from tRNA precursor, generating 3' termini of tRNAs. A 3'-hydroxy group is left at the tRNA terminus and a 5'-phosphoryl group is left at the trailer molecule.</text>
        <dbReference type="EC" id="3.1.26.11"/>
    </reaction>
</comment>
<comment type="cofactor">
    <cofactor evidence="1">
        <name>Zn(2+)</name>
        <dbReference type="ChEBI" id="CHEBI:29105"/>
    </cofactor>
    <text evidence="1">Binds 2 Zn(2+) ions.</text>
</comment>
<comment type="subunit">
    <text evidence="1">Homodimer.</text>
</comment>
<comment type="similarity">
    <text evidence="1">Belongs to the RNase Z family.</text>
</comment>
<feature type="chain" id="PRO_0000155920" description="Ribonuclease Z">
    <location>
        <begin position="1"/>
        <end position="306"/>
    </location>
</feature>
<feature type="active site" description="Proton acceptor" evidence="1">
    <location>
        <position position="66"/>
    </location>
</feature>
<feature type="binding site" evidence="1">
    <location>
        <position position="62"/>
    </location>
    <ligand>
        <name>Zn(2+)</name>
        <dbReference type="ChEBI" id="CHEBI:29105"/>
        <label>1</label>
        <note>catalytic</note>
    </ligand>
</feature>
<feature type="binding site" evidence="1">
    <location>
        <position position="64"/>
    </location>
    <ligand>
        <name>Zn(2+)</name>
        <dbReference type="ChEBI" id="CHEBI:29105"/>
        <label>1</label>
        <note>catalytic</note>
    </ligand>
</feature>
<feature type="binding site" evidence="1">
    <location>
        <position position="66"/>
    </location>
    <ligand>
        <name>Zn(2+)</name>
        <dbReference type="ChEBI" id="CHEBI:29105"/>
        <label>2</label>
        <note>catalytic</note>
    </ligand>
</feature>
<feature type="binding site" evidence="1">
    <location>
        <position position="67"/>
    </location>
    <ligand>
        <name>Zn(2+)</name>
        <dbReference type="ChEBI" id="CHEBI:29105"/>
        <label>2</label>
        <note>catalytic</note>
    </ligand>
</feature>
<feature type="binding site" evidence="1">
    <location>
        <position position="138"/>
    </location>
    <ligand>
        <name>Zn(2+)</name>
        <dbReference type="ChEBI" id="CHEBI:29105"/>
        <label>1</label>
        <note>catalytic</note>
    </ligand>
</feature>
<feature type="binding site" evidence="1">
    <location>
        <position position="209"/>
    </location>
    <ligand>
        <name>Zn(2+)</name>
        <dbReference type="ChEBI" id="CHEBI:29105"/>
        <label>1</label>
        <note>catalytic</note>
    </ligand>
</feature>
<feature type="binding site" evidence="1">
    <location>
        <position position="209"/>
    </location>
    <ligand>
        <name>Zn(2+)</name>
        <dbReference type="ChEBI" id="CHEBI:29105"/>
        <label>2</label>
        <note>catalytic</note>
    </ligand>
</feature>
<feature type="binding site" evidence="1">
    <location>
        <position position="267"/>
    </location>
    <ligand>
        <name>Zn(2+)</name>
        <dbReference type="ChEBI" id="CHEBI:29105"/>
        <label>2</label>
        <note>catalytic</note>
    </ligand>
</feature>
<dbReference type="EC" id="3.1.26.11" evidence="1"/>
<dbReference type="EMBL" id="AE000782">
    <property type="protein sequence ID" value="AAB90300.1"/>
    <property type="molecule type" value="Genomic_DNA"/>
</dbReference>
<dbReference type="PIR" id="C69367">
    <property type="entry name" value="C69367"/>
</dbReference>
<dbReference type="RefSeq" id="WP_010878439.1">
    <property type="nucleotide sequence ID" value="NC_000917.1"/>
</dbReference>
<dbReference type="SMR" id="O29323"/>
<dbReference type="STRING" id="224325.AF_0939"/>
<dbReference type="PaxDb" id="224325-AF_0939"/>
<dbReference type="DNASU" id="1484162"/>
<dbReference type="EnsemblBacteria" id="AAB90300">
    <property type="protein sequence ID" value="AAB90300"/>
    <property type="gene ID" value="AF_0939"/>
</dbReference>
<dbReference type="GeneID" id="1484162"/>
<dbReference type="KEGG" id="afu:AF_0939"/>
<dbReference type="eggNOG" id="arCOG00501">
    <property type="taxonomic scope" value="Archaea"/>
</dbReference>
<dbReference type="HOGENOM" id="CLU_031317_2_1_2"/>
<dbReference type="OrthoDB" id="85118at2157"/>
<dbReference type="PhylomeDB" id="O29323"/>
<dbReference type="Proteomes" id="UP000002199">
    <property type="component" value="Chromosome"/>
</dbReference>
<dbReference type="GO" id="GO:0042781">
    <property type="term" value="F:3'-tRNA processing endoribonuclease activity"/>
    <property type="evidence" value="ECO:0007669"/>
    <property type="project" value="UniProtKB-UniRule"/>
</dbReference>
<dbReference type="GO" id="GO:0008270">
    <property type="term" value="F:zinc ion binding"/>
    <property type="evidence" value="ECO:0007669"/>
    <property type="project" value="UniProtKB-UniRule"/>
</dbReference>
<dbReference type="CDD" id="cd07717">
    <property type="entry name" value="RNaseZ_ZiPD-like_MBL-fold"/>
    <property type="match status" value="1"/>
</dbReference>
<dbReference type="FunFam" id="3.60.15.10:FF:000002">
    <property type="entry name" value="Ribonuclease Z"/>
    <property type="match status" value="1"/>
</dbReference>
<dbReference type="Gene3D" id="3.60.15.10">
    <property type="entry name" value="Ribonuclease Z/Hydroxyacylglutathione hydrolase-like"/>
    <property type="match status" value="1"/>
</dbReference>
<dbReference type="HAMAP" id="MF_01818">
    <property type="entry name" value="RNase_Z_BN"/>
    <property type="match status" value="1"/>
</dbReference>
<dbReference type="InterPro" id="IPR001279">
    <property type="entry name" value="Metallo-B-lactamas"/>
</dbReference>
<dbReference type="InterPro" id="IPR036866">
    <property type="entry name" value="RibonucZ/Hydroxyglut_hydro"/>
</dbReference>
<dbReference type="InterPro" id="IPR013471">
    <property type="entry name" value="RNase_Z/BN"/>
</dbReference>
<dbReference type="NCBIfam" id="NF000801">
    <property type="entry name" value="PRK00055.1-3"/>
    <property type="match status" value="1"/>
</dbReference>
<dbReference type="NCBIfam" id="TIGR02651">
    <property type="entry name" value="RNase_Z"/>
    <property type="match status" value="1"/>
</dbReference>
<dbReference type="PANTHER" id="PTHR46018">
    <property type="entry name" value="ZINC PHOSPHODIESTERASE ELAC PROTEIN 1"/>
    <property type="match status" value="1"/>
</dbReference>
<dbReference type="PANTHER" id="PTHR46018:SF2">
    <property type="entry name" value="ZINC PHOSPHODIESTERASE ELAC PROTEIN 1"/>
    <property type="match status" value="1"/>
</dbReference>
<dbReference type="Pfam" id="PF12706">
    <property type="entry name" value="Lactamase_B_2"/>
    <property type="match status" value="2"/>
</dbReference>
<dbReference type="SUPFAM" id="SSF56281">
    <property type="entry name" value="Metallo-hydrolase/oxidoreductase"/>
    <property type="match status" value="1"/>
</dbReference>
<name>RNZ_ARCFU</name>
<sequence length="306" mass="34786">MLFKITFLGTSGTIPSVERNSPAIFVQFGGQRMLFDCGEGTQRQMMIAKTGFRNLDNIFITHLHTDHFIGLFGLIETMSLNERSRELNVYSPRAEVLRALFEAFGYDQLNYDIRVRELKDGEEVKFDGFKVVAFRTEHIVKSVGYAIIENDRRGKFNREKAEKELGIPPGPLYAKLARGESIVWKGRTITPDMVLGEKRRGRKVVYTGDSRPTKRTVEIARNADILIHDASFKEELKDWAIESGHSTAKEAAEVAREANVKKLILTHISTRYSKDASPLLEEAKKVFENTIIAEDFMSLEVTFDES</sequence>
<accession>O29323</accession>
<organism>
    <name type="scientific">Archaeoglobus fulgidus (strain ATCC 49558 / DSM 4304 / JCM 9628 / NBRC 100126 / VC-16)</name>
    <dbReference type="NCBI Taxonomy" id="224325"/>
    <lineage>
        <taxon>Archaea</taxon>
        <taxon>Methanobacteriati</taxon>
        <taxon>Methanobacteriota</taxon>
        <taxon>Archaeoglobi</taxon>
        <taxon>Archaeoglobales</taxon>
        <taxon>Archaeoglobaceae</taxon>
        <taxon>Archaeoglobus</taxon>
    </lineage>
</organism>